<keyword id="KW-0007">Acetylation</keyword>
<keyword id="KW-0175">Coiled coil</keyword>
<keyword id="KW-0375">Hydrogen ion transport</keyword>
<keyword id="KW-0406">Ion transport</keyword>
<keyword id="KW-0472">Membrane</keyword>
<keyword id="KW-0597">Phosphoprotein</keyword>
<keyword id="KW-1185">Reference proteome</keyword>
<keyword id="KW-0813">Transport</keyword>
<keyword id="KW-0926">Vacuole</keyword>
<gene>
    <name type="primary">VHA-E1</name>
    <name type="synonym">EMB2448</name>
    <name type="synonym">TUF</name>
    <name type="synonym">TUFF</name>
    <name type="synonym">VATE</name>
    <name type="ordered locus">At4g11150</name>
    <name type="ORF">F2P3.10</name>
    <name type="ORF">T22B4.130</name>
</gene>
<sequence length="230" mass="26060">MNDGDVSRQIQQMVRFIRQEAEEKANEISVSAEEEFNIEKLQLVEAEKKKIRQDYEKKEKQADVRKKIDYSMQLNASRIKVLQAQDDIVNAMKDQAAKDLLNVSRDEYAYKQLLKDLIVQCLLRLKEPSVLLRCREEDLGLVEAVLDDAKEEYAGKAKVHAPEVAVDTKIFLPPPPKSNDPHGLHCSGGVVLASRDGKIVCENTLDARLDVAFRMKLPVIRKSLFGQVTA</sequence>
<comment type="function">
    <text evidence="2">Subunit of the peripheral V1 complex of vacuolar ATPase essential for assembly or catalytic function. V-ATPase is responsible for acidifying a variety of intracellular compartments in eukaryotic cells. Required for Golgi organization and vacuole function in embryogenesis.</text>
</comment>
<comment type="subunit">
    <text>V-ATPase is a heteromultimeric enzyme composed of a peripheral catalytic V1 complex (components A to H) attached to an integral membrane V0 proton pore complex (components: a, c, c'', d and e).</text>
</comment>
<comment type="subcellular location">
    <subcellularLocation>
        <location evidence="2">Vacuole membrane</location>
        <topology evidence="2">Peripheral membrane protein</topology>
    </subcellularLocation>
</comment>
<comment type="developmental stage">
    <text evidence="2">Expressed mainly in the endosperm and surrounding maternal tissues during seed development.</text>
</comment>
<comment type="disruption phenotype">
    <text evidence="2">Mutant embryos are lethal, displaying variably enlarged cells with multiple nuclei, large vacuoles containing inclusions, abnormal organization of Golgi stacks, and cell wall defects.</text>
</comment>
<comment type="similarity">
    <text evidence="3">Belongs to the V-ATPase E subunit family.</text>
</comment>
<accession>Q39258</accession>
<accession>O82502</accession>
<name>VATE1_ARATH</name>
<dbReference type="EMBL" id="X92117">
    <property type="protein sequence ID" value="CAA63086.1"/>
    <property type="molecule type" value="mRNA"/>
</dbReference>
<dbReference type="EMBL" id="AF080120">
    <property type="protein sequence ID" value="AAC35545.1"/>
    <property type="molecule type" value="Genomic_DNA"/>
</dbReference>
<dbReference type="EMBL" id="AL049876">
    <property type="protein sequence ID" value="CAB43050.1"/>
    <property type="molecule type" value="Genomic_DNA"/>
</dbReference>
<dbReference type="EMBL" id="AL161531">
    <property type="protein sequence ID" value="CAB81216.1"/>
    <property type="molecule type" value="Genomic_DNA"/>
</dbReference>
<dbReference type="EMBL" id="CP002687">
    <property type="protein sequence ID" value="AEE82978.1"/>
    <property type="molecule type" value="Genomic_DNA"/>
</dbReference>
<dbReference type="EMBL" id="AY065119">
    <property type="protein sequence ID" value="AAL38295.1"/>
    <property type="molecule type" value="mRNA"/>
</dbReference>
<dbReference type="EMBL" id="AY081632">
    <property type="protein sequence ID" value="AAM10194.1"/>
    <property type="molecule type" value="mRNA"/>
</dbReference>
<dbReference type="PIR" id="T01918">
    <property type="entry name" value="T01918"/>
</dbReference>
<dbReference type="RefSeq" id="NP_192853.1">
    <property type="nucleotide sequence ID" value="NM_117185.5"/>
</dbReference>
<dbReference type="SMR" id="Q39258"/>
<dbReference type="BioGRID" id="12015">
    <property type="interactions" value="13"/>
</dbReference>
<dbReference type="FunCoup" id="Q39258">
    <property type="interactions" value="3728"/>
</dbReference>
<dbReference type="IntAct" id="Q39258">
    <property type="interactions" value="1"/>
</dbReference>
<dbReference type="STRING" id="3702.Q39258"/>
<dbReference type="TCDB" id="3.A.2.2.5">
    <property type="family name" value="the h+- or na+-translocating f-type, v-type and a-type atpase (f-atpase) superfamily"/>
</dbReference>
<dbReference type="iPTMnet" id="Q39258"/>
<dbReference type="MetOSite" id="Q39258"/>
<dbReference type="SwissPalm" id="Q39258"/>
<dbReference type="PaxDb" id="3702-AT4G11150.1"/>
<dbReference type="ProteomicsDB" id="228527"/>
<dbReference type="DNASU" id="826716"/>
<dbReference type="EnsemblPlants" id="AT4G11150.1">
    <property type="protein sequence ID" value="AT4G11150.1"/>
    <property type="gene ID" value="AT4G11150"/>
</dbReference>
<dbReference type="GeneID" id="826716"/>
<dbReference type="Gramene" id="AT4G11150.1">
    <property type="protein sequence ID" value="AT4G11150.1"/>
    <property type="gene ID" value="AT4G11150"/>
</dbReference>
<dbReference type="KEGG" id="ath:AT4G11150"/>
<dbReference type="Araport" id="AT4G11150"/>
<dbReference type="TAIR" id="AT4G11150">
    <property type="gene designation" value="TUF"/>
</dbReference>
<dbReference type="eggNOG" id="KOG1664">
    <property type="taxonomic scope" value="Eukaryota"/>
</dbReference>
<dbReference type="HOGENOM" id="CLU_073641_1_0_1"/>
<dbReference type="InParanoid" id="Q39258"/>
<dbReference type="OMA" id="KEIPMYK"/>
<dbReference type="OrthoDB" id="10263003at2759"/>
<dbReference type="PhylomeDB" id="Q39258"/>
<dbReference type="CD-CODE" id="4299E36E">
    <property type="entry name" value="Nucleolus"/>
</dbReference>
<dbReference type="PRO" id="PR:Q39258"/>
<dbReference type="Proteomes" id="UP000006548">
    <property type="component" value="Chromosome 4"/>
</dbReference>
<dbReference type="ExpressionAtlas" id="Q39258">
    <property type="expression patterns" value="baseline and differential"/>
</dbReference>
<dbReference type="GO" id="GO:0005829">
    <property type="term" value="C:cytosol"/>
    <property type="evidence" value="ECO:0007005"/>
    <property type="project" value="TAIR"/>
</dbReference>
<dbReference type="GO" id="GO:0022626">
    <property type="term" value="C:cytosolic ribosome"/>
    <property type="evidence" value="ECO:0007005"/>
    <property type="project" value="TAIR"/>
</dbReference>
<dbReference type="GO" id="GO:0005794">
    <property type="term" value="C:Golgi apparatus"/>
    <property type="evidence" value="ECO:0007005"/>
    <property type="project" value="TAIR"/>
</dbReference>
<dbReference type="GO" id="GO:0000325">
    <property type="term" value="C:plant-type vacuole"/>
    <property type="evidence" value="ECO:0007005"/>
    <property type="project" value="TAIR"/>
</dbReference>
<dbReference type="GO" id="GO:0009705">
    <property type="term" value="C:plant-type vacuole membrane"/>
    <property type="evidence" value="ECO:0000314"/>
    <property type="project" value="TAIR"/>
</dbReference>
<dbReference type="GO" id="GO:0033178">
    <property type="term" value="C:proton-transporting two-sector ATPase complex, catalytic domain"/>
    <property type="evidence" value="ECO:0007669"/>
    <property type="project" value="InterPro"/>
</dbReference>
<dbReference type="GO" id="GO:0005774">
    <property type="term" value="C:vacuolar membrane"/>
    <property type="evidence" value="ECO:0007005"/>
    <property type="project" value="TAIR"/>
</dbReference>
<dbReference type="GO" id="GO:0005773">
    <property type="term" value="C:vacuole"/>
    <property type="evidence" value="ECO:0007005"/>
    <property type="project" value="TAIR"/>
</dbReference>
<dbReference type="GO" id="GO:0046961">
    <property type="term" value="F:proton-transporting ATPase activity, rotational mechanism"/>
    <property type="evidence" value="ECO:0007669"/>
    <property type="project" value="InterPro"/>
</dbReference>
<dbReference type="GO" id="GO:0003735">
    <property type="term" value="F:structural constituent of ribosome"/>
    <property type="evidence" value="ECO:0000314"/>
    <property type="project" value="CAFA"/>
</dbReference>
<dbReference type="GO" id="GO:0009793">
    <property type="term" value="P:embryo development ending in seed dormancy"/>
    <property type="evidence" value="ECO:0000315"/>
    <property type="project" value="TAIR"/>
</dbReference>
<dbReference type="GO" id="GO:0007030">
    <property type="term" value="P:Golgi organization"/>
    <property type="evidence" value="ECO:0000315"/>
    <property type="project" value="TAIR"/>
</dbReference>
<dbReference type="GO" id="GO:0009832">
    <property type="term" value="P:plant-type cell wall biogenesis"/>
    <property type="evidence" value="ECO:0000315"/>
    <property type="project" value="TAIR"/>
</dbReference>
<dbReference type="GO" id="GO:0009409">
    <property type="term" value="P:response to cold"/>
    <property type="evidence" value="ECO:0000270"/>
    <property type="project" value="TAIR"/>
</dbReference>
<dbReference type="FunFam" id="3.30.2320.30:FF:000002">
    <property type="entry name" value="V-type proton ATPase subunit E3"/>
    <property type="match status" value="1"/>
</dbReference>
<dbReference type="Gene3D" id="6.10.250.1620">
    <property type="match status" value="1"/>
</dbReference>
<dbReference type="Gene3D" id="3.30.2320.30">
    <property type="entry name" value="ATP synthase, E subunit, C-terminal"/>
    <property type="match status" value="1"/>
</dbReference>
<dbReference type="HAMAP" id="MF_00311">
    <property type="entry name" value="ATP_synth_E_arch"/>
    <property type="match status" value="1"/>
</dbReference>
<dbReference type="InterPro" id="IPR038495">
    <property type="entry name" value="ATPase_E_C"/>
</dbReference>
<dbReference type="InterPro" id="IPR002842">
    <property type="entry name" value="ATPase_V1_Esu"/>
</dbReference>
<dbReference type="PANTHER" id="PTHR45715">
    <property type="entry name" value="ATPASE H+-TRANSPORTING V1 SUBUNIT E1A-RELATED"/>
    <property type="match status" value="1"/>
</dbReference>
<dbReference type="Pfam" id="PF01991">
    <property type="entry name" value="vATP-synt_E"/>
    <property type="match status" value="1"/>
</dbReference>
<dbReference type="SUPFAM" id="SSF160527">
    <property type="entry name" value="V-type ATPase subunit E-like"/>
    <property type="match status" value="1"/>
</dbReference>
<feature type="chain" id="PRO_0000117301" description="V-type proton ATPase subunit E1">
    <location>
        <begin position="1"/>
        <end position="230"/>
    </location>
</feature>
<feature type="coiled-coil region" evidence="1">
    <location>
        <begin position="8"/>
        <end position="67"/>
    </location>
</feature>
<feature type="modified residue" description="N-acetylmethionine" evidence="5">
    <location>
        <position position="1"/>
    </location>
</feature>
<feature type="modified residue" description="Phosphoserine" evidence="4">
    <location>
        <position position="178"/>
    </location>
</feature>
<feature type="sequence conflict" description="In Ref. 1; CAA63086." evidence="3" ref="1">
    <original>S</original>
    <variation>P</variation>
    <location>
        <position position="31"/>
    </location>
</feature>
<organism>
    <name type="scientific">Arabidopsis thaliana</name>
    <name type="common">Mouse-ear cress</name>
    <dbReference type="NCBI Taxonomy" id="3702"/>
    <lineage>
        <taxon>Eukaryota</taxon>
        <taxon>Viridiplantae</taxon>
        <taxon>Streptophyta</taxon>
        <taxon>Embryophyta</taxon>
        <taxon>Tracheophyta</taxon>
        <taxon>Spermatophyta</taxon>
        <taxon>Magnoliopsida</taxon>
        <taxon>eudicotyledons</taxon>
        <taxon>Gunneridae</taxon>
        <taxon>Pentapetalae</taxon>
        <taxon>rosids</taxon>
        <taxon>malvids</taxon>
        <taxon>Brassicales</taxon>
        <taxon>Brassicaceae</taxon>
        <taxon>Camelineae</taxon>
        <taxon>Arabidopsis</taxon>
    </lineage>
</organism>
<reference key="1">
    <citation type="online journal article" date="1996" name="Plant Gene Register">
        <title>Nucleotide sequences of subunit E of the vacuolar proton-ATPase of Spinacia oleracea and Arabidopsis thaliana.</title>
        <authorList>
            <person name="Dietz K.-J."/>
            <person name="Hollenbach B."/>
            <person name="Arnold J."/>
        </authorList>
        <locator>PGR96-037</locator>
    </citation>
    <scope>NUCLEOTIDE SEQUENCE [MRNA]</scope>
    <source>
        <strain>cv. Columbia</strain>
    </source>
</reference>
<reference key="2">
    <citation type="journal article" date="1999" name="Nature">
        <title>Sequence and analysis of chromosome 4 of the plant Arabidopsis thaliana.</title>
        <authorList>
            <person name="Mayer K.F.X."/>
            <person name="Schueller C."/>
            <person name="Wambutt R."/>
            <person name="Murphy G."/>
            <person name="Volckaert G."/>
            <person name="Pohl T."/>
            <person name="Duesterhoeft A."/>
            <person name="Stiekema W."/>
            <person name="Entian K.-D."/>
            <person name="Terryn N."/>
            <person name="Harris B."/>
            <person name="Ansorge W."/>
            <person name="Brandt P."/>
            <person name="Grivell L.A."/>
            <person name="Rieger M."/>
            <person name="Weichselgartner M."/>
            <person name="de Simone V."/>
            <person name="Obermaier B."/>
            <person name="Mache R."/>
            <person name="Mueller M."/>
            <person name="Kreis M."/>
            <person name="Delseny M."/>
            <person name="Puigdomenech P."/>
            <person name="Watson M."/>
            <person name="Schmidtheini T."/>
            <person name="Reichert B."/>
            <person name="Portetelle D."/>
            <person name="Perez-Alonso M."/>
            <person name="Boutry M."/>
            <person name="Bancroft I."/>
            <person name="Vos P."/>
            <person name="Hoheisel J."/>
            <person name="Zimmermann W."/>
            <person name="Wedler H."/>
            <person name="Ridley P."/>
            <person name="Langham S.-A."/>
            <person name="McCullagh B."/>
            <person name="Bilham L."/>
            <person name="Robben J."/>
            <person name="van der Schueren J."/>
            <person name="Grymonprez B."/>
            <person name="Chuang Y.-J."/>
            <person name="Vandenbussche F."/>
            <person name="Braeken M."/>
            <person name="Weltjens I."/>
            <person name="Voet M."/>
            <person name="Bastiaens I."/>
            <person name="Aert R."/>
            <person name="Defoor E."/>
            <person name="Weitzenegger T."/>
            <person name="Bothe G."/>
            <person name="Ramsperger U."/>
            <person name="Hilbert H."/>
            <person name="Braun M."/>
            <person name="Holzer E."/>
            <person name="Brandt A."/>
            <person name="Peters S."/>
            <person name="van Staveren M."/>
            <person name="Dirkse W."/>
            <person name="Mooijman P."/>
            <person name="Klein Lankhorst R."/>
            <person name="Rose M."/>
            <person name="Hauf J."/>
            <person name="Koetter P."/>
            <person name="Berneiser S."/>
            <person name="Hempel S."/>
            <person name="Feldpausch M."/>
            <person name="Lamberth S."/>
            <person name="Van den Daele H."/>
            <person name="De Keyser A."/>
            <person name="Buysshaert C."/>
            <person name="Gielen J."/>
            <person name="Villarroel R."/>
            <person name="De Clercq R."/>
            <person name="van Montagu M."/>
            <person name="Rogers J."/>
            <person name="Cronin A."/>
            <person name="Quail M.A."/>
            <person name="Bray-Allen S."/>
            <person name="Clark L."/>
            <person name="Doggett J."/>
            <person name="Hall S."/>
            <person name="Kay M."/>
            <person name="Lennard N."/>
            <person name="McLay K."/>
            <person name="Mayes R."/>
            <person name="Pettett A."/>
            <person name="Rajandream M.A."/>
            <person name="Lyne M."/>
            <person name="Benes V."/>
            <person name="Rechmann S."/>
            <person name="Borkova D."/>
            <person name="Bloecker H."/>
            <person name="Scharfe M."/>
            <person name="Grimm M."/>
            <person name="Loehnert T.-H."/>
            <person name="Dose S."/>
            <person name="de Haan M."/>
            <person name="Maarse A.C."/>
            <person name="Schaefer M."/>
            <person name="Mueller-Auer S."/>
            <person name="Gabel C."/>
            <person name="Fuchs M."/>
            <person name="Fartmann B."/>
            <person name="Granderath K."/>
            <person name="Dauner D."/>
            <person name="Herzl A."/>
            <person name="Neumann S."/>
            <person name="Argiriou A."/>
            <person name="Vitale D."/>
            <person name="Liguori R."/>
            <person name="Piravandi E."/>
            <person name="Massenet O."/>
            <person name="Quigley F."/>
            <person name="Clabauld G."/>
            <person name="Muendlein A."/>
            <person name="Felber R."/>
            <person name="Schnabl S."/>
            <person name="Hiller R."/>
            <person name="Schmidt W."/>
            <person name="Lecharny A."/>
            <person name="Aubourg S."/>
            <person name="Chefdor F."/>
            <person name="Cooke R."/>
            <person name="Berger C."/>
            <person name="Monfort A."/>
            <person name="Casacuberta E."/>
            <person name="Gibbons T."/>
            <person name="Weber N."/>
            <person name="Vandenbol M."/>
            <person name="Bargues M."/>
            <person name="Terol J."/>
            <person name="Torres A."/>
            <person name="Perez-Perez A."/>
            <person name="Purnelle B."/>
            <person name="Bent E."/>
            <person name="Johnson S."/>
            <person name="Tacon D."/>
            <person name="Jesse T."/>
            <person name="Heijnen L."/>
            <person name="Schwarz S."/>
            <person name="Scholler P."/>
            <person name="Heber S."/>
            <person name="Francs P."/>
            <person name="Bielke C."/>
            <person name="Frishman D."/>
            <person name="Haase D."/>
            <person name="Lemcke K."/>
            <person name="Mewes H.-W."/>
            <person name="Stocker S."/>
            <person name="Zaccaria P."/>
            <person name="Bevan M."/>
            <person name="Wilson R.K."/>
            <person name="de la Bastide M."/>
            <person name="Habermann K."/>
            <person name="Parnell L."/>
            <person name="Dedhia N."/>
            <person name="Gnoj L."/>
            <person name="Schutz K."/>
            <person name="Huang E."/>
            <person name="Spiegel L."/>
            <person name="Sekhon M."/>
            <person name="Murray J."/>
            <person name="Sheet P."/>
            <person name="Cordes M."/>
            <person name="Abu-Threideh J."/>
            <person name="Stoneking T."/>
            <person name="Kalicki J."/>
            <person name="Graves T."/>
            <person name="Harmon G."/>
            <person name="Edwards J."/>
            <person name="Latreille P."/>
            <person name="Courtney L."/>
            <person name="Cloud J."/>
            <person name="Abbott A."/>
            <person name="Scott K."/>
            <person name="Johnson D."/>
            <person name="Minx P."/>
            <person name="Bentley D."/>
            <person name="Fulton B."/>
            <person name="Miller N."/>
            <person name="Greco T."/>
            <person name="Kemp K."/>
            <person name="Kramer J."/>
            <person name="Fulton L."/>
            <person name="Mardis E."/>
            <person name="Dante M."/>
            <person name="Pepin K."/>
            <person name="Hillier L.W."/>
            <person name="Nelson J."/>
            <person name="Spieth J."/>
            <person name="Ryan E."/>
            <person name="Andrews S."/>
            <person name="Geisel C."/>
            <person name="Layman D."/>
            <person name="Du H."/>
            <person name="Ali J."/>
            <person name="Berghoff A."/>
            <person name="Jones K."/>
            <person name="Drone K."/>
            <person name="Cotton M."/>
            <person name="Joshu C."/>
            <person name="Antonoiu B."/>
            <person name="Zidanic M."/>
            <person name="Strong C."/>
            <person name="Sun H."/>
            <person name="Lamar B."/>
            <person name="Yordan C."/>
            <person name="Ma P."/>
            <person name="Zhong J."/>
            <person name="Preston R."/>
            <person name="Vil D."/>
            <person name="Shekher M."/>
            <person name="Matero A."/>
            <person name="Shah R."/>
            <person name="Swaby I.K."/>
            <person name="O'Shaughnessy A."/>
            <person name="Rodriguez M."/>
            <person name="Hoffman J."/>
            <person name="Till S."/>
            <person name="Granat S."/>
            <person name="Shohdy N."/>
            <person name="Hasegawa A."/>
            <person name="Hameed A."/>
            <person name="Lodhi M."/>
            <person name="Johnson A."/>
            <person name="Chen E."/>
            <person name="Marra M.A."/>
            <person name="Martienssen R."/>
            <person name="McCombie W.R."/>
        </authorList>
    </citation>
    <scope>NUCLEOTIDE SEQUENCE [LARGE SCALE GENOMIC DNA]</scope>
    <source>
        <strain>cv. Columbia</strain>
    </source>
</reference>
<reference key="3">
    <citation type="journal article" date="2017" name="Plant J.">
        <title>Araport11: a complete reannotation of the Arabidopsis thaliana reference genome.</title>
        <authorList>
            <person name="Cheng C.Y."/>
            <person name="Krishnakumar V."/>
            <person name="Chan A.P."/>
            <person name="Thibaud-Nissen F."/>
            <person name="Schobel S."/>
            <person name="Town C.D."/>
        </authorList>
    </citation>
    <scope>GENOME REANNOTATION</scope>
    <source>
        <strain>cv. Columbia</strain>
    </source>
</reference>
<reference key="4">
    <citation type="journal article" date="2003" name="Science">
        <title>Empirical analysis of transcriptional activity in the Arabidopsis genome.</title>
        <authorList>
            <person name="Yamada K."/>
            <person name="Lim J."/>
            <person name="Dale J.M."/>
            <person name="Chen H."/>
            <person name="Shinn P."/>
            <person name="Palm C.J."/>
            <person name="Southwick A.M."/>
            <person name="Wu H.C."/>
            <person name="Kim C.J."/>
            <person name="Nguyen M."/>
            <person name="Pham P.K."/>
            <person name="Cheuk R.F."/>
            <person name="Karlin-Newmann G."/>
            <person name="Liu S.X."/>
            <person name="Lam B."/>
            <person name="Sakano H."/>
            <person name="Wu T."/>
            <person name="Yu G."/>
            <person name="Miranda M."/>
            <person name="Quach H.L."/>
            <person name="Tripp M."/>
            <person name="Chang C.H."/>
            <person name="Lee J.M."/>
            <person name="Toriumi M.J."/>
            <person name="Chan M.M."/>
            <person name="Tang C.C."/>
            <person name="Onodera C.S."/>
            <person name="Deng J.M."/>
            <person name="Akiyama K."/>
            <person name="Ansari Y."/>
            <person name="Arakawa T."/>
            <person name="Banh J."/>
            <person name="Banno F."/>
            <person name="Bowser L."/>
            <person name="Brooks S.Y."/>
            <person name="Carninci P."/>
            <person name="Chao Q."/>
            <person name="Choy N."/>
            <person name="Enju A."/>
            <person name="Goldsmith A.D."/>
            <person name="Gurjal M."/>
            <person name="Hansen N.F."/>
            <person name="Hayashizaki Y."/>
            <person name="Johnson-Hopson C."/>
            <person name="Hsuan V.W."/>
            <person name="Iida K."/>
            <person name="Karnes M."/>
            <person name="Khan S."/>
            <person name="Koesema E."/>
            <person name="Ishida J."/>
            <person name="Jiang P.X."/>
            <person name="Jones T."/>
            <person name="Kawai J."/>
            <person name="Kamiya A."/>
            <person name="Meyers C."/>
            <person name="Nakajima M."/>
            <person name="Narusaka M."/>
            <person name="Seki M."/>
            <person name="Sakurai T."/>
            <person name="Satou M."/>
            <person name="Tamse R."/>
            <person name="Vaysberg M."/>
            <person name="Wallender E.K."/>
            <person name="Wong C."/>
            <person name="Yamamura Y."/>
            <person name="Yuan S."/>
            <person name="Shinozaki K."/>
            <person name="Davis R.W."/>
            <person name="Theologis A."/>
            <person name="Ecker J.R."/>
        </authorList>
    </citation>
    <scope>NUCLEOTIDE SEQUENCE [LARGE SCALE MRNA]</scope>
    <source>
        <strain>cv. Columbia</strain>
    </source>
</reference>
<reference key="5">
    <citation type="journal article" date="2002" name="Trends Plant Sci.">
        <title>A simple nomenclature for a complex proton pump: VHA genes encode the vacuolar H(+)-ATPase.</title>
        <authorList>
            <person name="Sze H."/>
            <person name="Schumacher K."/>
            <person name="Mueller M.L."/>
            <person name="Padmanaban S."/>
            <person name="Taiz L."/>
        </authorList>
    </citation>
    <scope>GENE FAMILY</scope>
    <scope>NOMENCLATURE</scope>
</reference>
<reference key="6">
    <citation type="journal article" date="2005" name="Plant J.">
        <title>Arabidopsis vacuolar H(+)-ATPase subunit E isoform 1 is required for Golgi organization and vacuole function in embryogenesis.</title>
        <authorList>
            <person name="Strompen G."/>
            <person name="Dettmer J."/>
            <person name="Stierhof Y.-D."/>
            <person name="Schumacher K."/>
            <person name="Juergens G."/>
            <person name="Mayer U."/>
        </authorList>
    </citation>
    <scope>FUNCTION</scope>
    <scope>DISRUPTION PHENOTYPE</scope>
    <scope>DEVELOPMENTAL STAGE</scope>
    <scope>SUBCELLULAR LOCATION</scope>
</reference>
<reference key="7">
    <citation type="journal article" date="2012" name="J. Proteome Res.">
        <title>Identification of phosphoproteins in Arabidopsis thaliana leaves using polyethylene glycol fractionation, immobilized metal-ion affinity chromatography, two-dimensional gel electrophoresis and mass spectrometry.</title>
        <authorList>
            <person name="Aryal U.K."/>
            <person name="Krochko J.E."/>
            <person name="Ross A.R."/>
        </authorList>
    </citation>
    <scope>PHOSPHORYLATION [LARGE SCALE ANALYSIS] AT SER-178</scope>
    <scope>IDENTIFICATION BY MASS SPECTROMETRY [LARGE SCALE ANALYSIS]</scope>
</reference>
<reference key="8">
    <citation type="journal article" date="2012" name="Mol. Cell. Proteomics">
        <title>Comparative large-scale characterisation of plant vs. mammal proteins reveals similar and idiosyncratic N-alpha acetylation features.</title>
        <authorList>
            <person name="Bienvenut W.V."/>
            <person name="Sumpton D."/>
            <person name="Martinez A."/>
            <person name="Lilla S."/>
            <person name="Espagne C."/>
            <person name="Meinnel T."/>
            <person name="Giglione C."/>
        </authorList>
    </citation>
    <scope>ACETYLATION [LARGE SCALE ANALYSIS] AT MET-1</scope>
    <scope>IDENTIFICATION BY MASS SPECTROMETRY [LARGE SCALE ANALYSIS]</scope>
</reference>
<proteinExistence type="evidence at protein level"/>
<protein>
    <recommendedName>
        <fullName>V-type proton ATPase subunit E1</fullName>
        <shortName>V-ATPase subunit E1</shortName>
    </recommendedName>
    <alternativeName>
        <fullName>Protein EMBRYO DEFECTIVE 2448</fullName>
    </alternativeName>
    <alternativeName>
        <fullName>Vacuolar H(+)-ATPase subunit E isoform 1</fullName>
    </alternativeName>
    <alternativeName>
        <fullName>Vacuolar proton pump subunit E1</fullName>
    </alternativeName>
</protein>
<evidence type="ECO:0000255" key="1"/>
<evidence type="ECO:0000269" key="2">
    <source>
    </source>
</evidence>
<evidence type="ECO:0000305" key="3"/>
<evidence type="ECO:0007744" key="4">
    <source>
    </source>
</evidence>
<evidence type="ECO:0007744" key="5">
    <source>
    </source>
</evidence>